<keyword id="KW-0472">Membrane</keyword>
<keyword id="KW-0520">NAD</keyword>
<keyword id="KW-0521">NADP</keyword>
<keyword id="KW-0618">Plastoquinone</keyword>
<keyword id="KW-0874">Quinone</keyword>
<keyword id="KW-1185">Reference proteome</keyword>
<keyword id="KW-0793">Thylakoid</keyword>
<keyword id="KW-1278">Translocase</keyword>
<keyword id="KW-0812">Transmembrane</keyword>
<keyword id="KW-1133">Transmembrane helix</keyword>
<keyword id="KW-0813">Transport</keyword>
<proteinExistence type="inferred from homology"/>
<name>NU2C_PROM0</name>
<accession>A3PBF7</accession>
<organism>
    <name type="scientific">Prochlorococcus marinus (strain MIT 9301)</name>
    <dbReference type="NCBI Taxonomy" id="167546"/>
    <lineage>
        <taxon>Bacteria</taxon>
        <taxon>Bacillati</taxon>
        <taxon>Cyanobacteriota</taxon>
        <taxon>Cyanophyceae</taxon>
        <taxon>Synechococcales</taxon>
        <taxon>Prochlorococcaceae</taxon>
        <taxon>Prochlorococcus</taxon>
    </lineage>
</organism>
<evidence type="ECO:0000255" key="1">
    <source>
        <dbReference type="HAMAP-Rule" id="MF_00445"/>
    </source>
</evidence>
<protein>
    <recommendedName>
        <fullName evidence="1">NAD(P)H-quinone oxidoreductase subunit 2</fullName>
        <ecNumber evidence="1">7.1.1.-</ecNumber>
    </recommendedName>
    <alternativeName>
        <fullName evidence="1">NAD(P)H dehydrogenase subunit 2</fullName>
    </alternativeName>
    <alternativeName>
        <fullName evidence="1">NADH-plastoquinone oxidoreductase subunit 2</fullName>
    </alternativeName>
    <alternativeName>
        <fullName evidence="1">NDH-1, subunit 2</fullName>
    </alternativeName>
</protein>
<comment type="function">
    <text evidence="1">NDH-1 shuttles electrons from an unknown electron donor, via FMN and iron-sulfur (Fe-S) centers, to quinones in the respiratory and/or the photosynthetic chain. The immediate electron acceptor for the enzyme in this species is believed to be plastoquinone. Couples the redox reaction to proton translocation, and thus conserves the redox energy in a proton gradient. Cyanobacterial NDH-1 also plays a role in inorganic carbon-concentration.</text>
</comment>
<comment type="catalytic activity">
    <reaction evidence="1">
        <text>a plastoquinone + NADH + (n+1) H(+)(in) = a plastoquinol + NAD(+) + n H(+)(out)</text>
        <dbReference type="Rhea" id="RHEA:42608"/>
        <dbReference type="Rhea" id="RHEA-COMP:9561"/>
        <dbReference type="Rhea" id="RHEA-COMP:9562"/>
        <dbReference type="ChEBI" id="CHEBI:15378"/>
        <dbReference type="ChEBI" id="CHEBI:17757"/>
        <dbReference type="ChEBI" id="CHEBI:57540"/>
        <dbReference type="ChEBI" id="CHEBI:57945"/>
        <dbReference type="ChEBI" id="CHEBI:62192"/>
    </reaction>
</comment>
<comment type="catalytic activity">
    <reaction evidence="1">
        <text>a plastoquinone + NADPH + (n+1) H(+)(in) = a plastoquinol + NADP(+) + n H(+)(out)</text>
        <dbReference type="Rhea" id="RHEA:42612"/>
        <dbReference type="Rhea" id="RHEA-COMP:9561"/>
        <dbReference type="Rhea" id="RHEA-COMP:9562"/>
        <dbReference type="ChEBI" id="CHEBI:15378"/>
        <dbReference type="ChEBI" id="CHEBI:17757"/>
        <dbReference type="ChEBI" id="CHEBI:57783"/>
        <dbReference type="ChEBI" id="CHEBI:58349"/>
        <dbReference type="ChEBI" id="CHEBI:62192"/>
    </reaction>
</comment>
<comment type="subunit">
    <text evidence="1">NDH-1 can be composed of about 15 different subunits; different subcomplexes with different compositions have been identified which probably have different functions.</text>
</comment>
<comment type="subcellular location">
    <subcellularLocation>
        <location evidence="1">Cellular thylakoid membrane</location>
        <topology evidence="1">Multi-pass membrane protein</topology>
    </subcellularLocation>
</comment>
<comment type="similarity">
    <text evidence="1">Belongs to the complex I subunit 2 family.</text>
</comment>
<gene>
    <name evidence="1" type="primary">ndhB</name>
    <name type="ordered locus">P9301_04591</name>
</gene>
<feature type="chain" id="PRO_1000026150" description="NAD(P)H-quinone oxidoreductase subunit 2">
    <location>
        <begin position="1"/>
        <end position="506"/>
    </location>
</feature>
<feature type="transmembrane region" description="Helical" evidence="1">
    <location>
        <begin position="14"/>
        <end position="34"/>
    </location>
</feature>
<feature type="transmembrane region" description="Helical" evidence="1">
    <location>
        <begin position="42"/>
        <end position="62"/>
    </location>
</feature>
<feature type="transmembrane region" description="Helical" evidence="1">
    <location>
        <begin position="79"/>
        <end position="99"/>
    </location>
</feature>
<feature type="transmembrane region" description="Helical" evidence="1">
    <location>
        <begin position="108"/>
        <end position="128"/>
    </location>
</feature>
<feature type="transmembrane region" description="Helical" evidence="1">
    <location>
        <begin position="132"/>
        <end position="152"/>
    </location>
</feature>
<feature type="transmembrane region" description="Helical" evidence="1">
    <location>
        <begin position="167"/>
        <end position="187"/>
    </location>
</feature>
<feature type="transmembrane region" description="Helical" evidence="1">
    <location>
        <begin position="206"/>
        <end position="226"/>
    </location>
</feature>
<feature type="transmembrane region" description="Helical" evidence="1">
    <location>
        <begin position="240"/>
        <end position="260"/>
    </location>
</feature>
<feature type="transmembrane region" description="Helical" evidence="1">
    <location>
        <begin position="276"/>
        <end position="296"/>
    </location>
</feature>
<feature type="transmembrane region" description="Helical" evidence="1">
    <location>
        <begin position="302"/>
        <end position="322"/>
    </location>
</feature>
<feature type="transmembrane region" description="Helical" evidence="1">
    <location>
        <begin position="330"/>
        <end position="350"/>
    </location>
</feature>
<feature type="transmembrane region" description="Helical" evidence="1">
    <location>
        <begin position="374"/>
        <end position="394"/>
    </location>
</feature>
<feature type="transmembrane region" description="Helical" evidence="1">
    <location>
        <begin position="409"/>
        <end position="429"/>
    </location>
</feature>
<dbReference type="EC" id="7.1.1.-" evidence="1"/>
<dbReference type="EMBL" id="CP000576">
    <property type="protein sequence ID" value="ABO17082.1"/>
    <property type="molecule type" value="Genomic_DNA"/>
</dbReference>
<dbReference type="RefSeq" id="WP_011862457.1">
    <property type="nucleotide sequence ID" value="NC_009091.1"/>
</dbReference>
<dbReference type="SMR" id="A3PBF7"/>
<dbReference type="STRING" id="167546.P9301_04591"/>
<dbReference type="KEGG" id="pmg:P9301_04591"/>
<dbReference type="eggNOG" id="COG1007">
    <property type="taxonomic scope" value="Bacteria"/>
</dbReference>
<dbReference type="HOGENOM" id="CLU_007100_1_2_3"/>
<dbReference type="OrthoDB" id="9811718at2"/>
<dbReference type="Proteomes" id="UP000001430">
    <property type="component" value="Chromosome"/>
</dbReference>
<dbReference type="GO" id="GO:0031676">
    <property type="term" value="C:plasma membrane-derived thylakoid membrane"/>
    <property type="evidence" value="ECO:0007669"/>
    <property type="project" value="UniProtKB-SubCell"/>
</dbReference>
<dbReference type="GO" id="GO:0008137">
    <property type="term" value="F:NADH dehydrogenase (ubiquinone) activity"/>
    <property type="evidence" value="ECO:0007669"/>
    <property type="project" value="InterPro"/>
</dbReference>
<dbReference type="GO" id="GO:0048038">
    <property type="term" value="F:quinone binding"/>
    <property type="evidence" value="ECO:0007669"/>
    <property type="project" value="UniProtKB-KW"/>
</dbReference>
<dbReference type="GO" id="GO:0042773">
    <property type="term" value="P:ATP synthesis coupled electron transport"/>
    <property type="evidence" value="ECO:0007669"/>
    <property type="project" value="InterPro"/>
</dbReference>
<dbReference type="GO" id="GO:0019684">
    <property type="term" value="P:photosynthesis, light reaction"/>
    <property type="evidence" value="ECO:0007669"/>
    <property type="project" value="UniProtKB-UniRule"/>
</dbReference>
<dbReference type="HAMAP" id="MF_00445">
    <property type="entry name" value="NDH1_NuoN_1"/>
    <property type="match status" value="1"/>
</dbReference>
<dbReference type="InterPro" id="IPR010096">
    <property type="entry name" value="NADH-Q_OxRdtase_suN/2"/>
</dbReference>
<dbReference type="InterPro" id="IPR001750">
    <property type="entry name" value="ND/Mrp_TM"/>
</dbReference>
<dbReference type="NCBIfam" id="TIGR01770">
    <property type="entry name" value="NDH_I_N"/>
    <property type="match status" value="1"/>
</dbReference>
<dbReference type="NCBIfam" id="NF002701">
    <property type="entry name" value="PRK02504.1"/>
    <property type="match status" value="1"/>
</dbReference>
<dbReference type="PANTHER" id="PTHR22773">
    <property type="entry name" value="NADH DEHYDROGENASE"/>
    <property type="match status" value="1"/>
</dbReference>
<dbReference type="Pfam" id="PF00361">
    <property type="entry name" value="Proton_antipo_M"/>
    <property type="match status" value="1"/>
</dbReference>
<sequence length="506" mass="54016">MPNEIFTINLNAQAIIPEAFILLGIVGTLLVDLAGEKTASKWAPSICYLSIGSSLLSLTLQWNNPVESAFLGSFNSDNLAIAFRAIIALSTLVSLLISWRYTEQSGSPIGEFAAIVLSATLGAMLLCGSTDLISVFISLETLSVASYLLSGYLKRDPRSSEAALKYLLVGSAAAAVYLYGSSFLYGLSGSTNLTTIGLEIINKPSFITSLALVFVLSTVAFKIAAVPFHQWTPDVYEGSPTPVVAFLSVGSKTAGFAFAIRILSTTFSSFDEEWKLLFTILAILSMALGNVVALAQTSMKRMLAYSSIGQAGFVMIGIVSGTQDGLSAAVLYLAAYLFMNLGAFSCVILFSLRTGSDRILDYSGLYQKDPLITLGLSLCLLSLGGLPPMLGFFGKIYLFFAGWANHQYLLVIVGLVTSVISIYYYISVIKMMVVKEPQEASEIVKSYPEVNWGIAGLPPLRVALYTCVAVTALGGILSNPLFKLANTAVSETPFLQDVIAAANNIS</sequence>
<reference key="1">
    <citation type="journal article" date="2007" name="PLoS Genet.">
        <title>Patterns and implications of gene gain and loss in the evolution of Prochlorococcus.</title>
        <authorList>
            <person name="Kettler G.C."/>
            <person name="Martiny A.C."/>
            <person name="Huang K."/>
            <person name="Zucker J."/>
            <person name="Coleman M.L."/>
            <person name="Rodrigue S."/>
            <person name="Chen F."/>
            <person name="Lapidus A."/>
            <person name="Ferriera S."/>
            <person name="Johnson J."/>
            <person name="Steglich C."/>
            <person name="Church G.M."/>
            <person name="Richardson P."/>
            <person name="Chisholm S.W."/>
        </authorList>
    </citation>
    <scope>NUCLEOTIDE SEQUENCE [LARGE SCALE GENOMIC DNA]</scope>
    <source>
        <strain>MIT 9301</strain>
    </source>
</reference>